<organism>
    <name type="scientific">Clostridium botulinum (strain Okra / Type B1)</name>
    <dbReference type="NCBI Taxonomy" id="498213"/>
    <lineage>
        <taxon>Bacteria</taxon>
        <taxon>Bacillati</taxon>
        <taxon>Bacillota</taxon>
        <taxon>Clostridia</taxon>
        <taxon>Eubacteriales</taxon>
        <taxon>Clostridiaceae</taxon>
        <taxon>Clostridium</taxon>
    </lineage>
</organism>
<reference key="1">
    <citation type="journal article" date="2007" name="PLoS ONE">
        <title>Analysis of the neurotoxin complex genes in Clostridium botulinum A1-A4 and B1 strains: BoNT/A3, /Ba4 and /B1 clusters are located within plasmids.</title>
        <authorList>
            <person name="Smith T.J."/>
            <person name="Hill K.K."/>
            <person name="Foley B.T."/>
            <person name="Detter J.C."/>
            <person name="Munk A.C."/>
            <person name="Bruce D.C."/>
            <person name="Doggett N.A."/>
            <person name="Smith L.A."/>
            <person name="Marks J.D."/>
            <person name="Xie G."/>
            <person name="Brettin T.S."/>
        </authorList>
    </citation>
    <scope>NUCLEOTIDE SEQUENCE [LARGE SCALE GENOMIC DNA]</scope>
    <source>
        <strain>Okra / Type B1</strain>
    </source>
</reference>
<comment type="function">
    <text evidence="1">Displays ATPase and GTPase activities.</text>
</comment>
<comment type="similarity">
    <text evidence="1">Belongs to the RapZ-like family.</text>
</comment>
<proteinExistence type="inferred from homology"/>
<gene>
    <name type="ordered locus">CLD_1131</name>
</gene>
<name>Y1131_CLOBK</name>
<keyword id="KW-0067">ATP-binding</keyword>
<keyword id="KW-0342">GTP-binding</keyword>
<keyword id="KW-0547">Nucleotide-binding</keyword>
<sequence>MRFVIVTGLSGAGKTQAIRSLEDLGFFCVDNLPPTLIPKFAEACYQTEGKIKKIALVIDIRGGKFFDDLFESLKYLKEEGYKYEILFLDASDEVLIKRFKESRRKHPLSPDGRILNGISMERNRLREVKDRADNIINTSELATRELREAINEIYGEHDQIENQLIITVLSFGFKHGIPLDSDLVFDVRFLPNPYYIKELKQYSGKDKKVSDYVMSFDVTNKFVNRLEDMLDFLIPNYFKEGKRQLIISIGCTGGRHRSVAIANAIYEGLKSKGHKVNIDHRDINEDIHKGGKKL</sequence>
<feature type="chain" id="PRO_1000130743" description="Nucleotide-binding protein CLD_1131">
    <location>
        <begin position="1"/>
        <end position="294"/>
    </location>
</feature>
<feature type="binding site" evidence="1">
    <location>
        <begin position="8"/>
        <end position="15"/>
    </location>
    <ligand>
        <name>ATP</name>
        <dbReference type="ChEBI" id="CHEBI:30616"/>
    </ligand>
</feature>
<feature type="binding site" evidence="1">
    <location>
        <begin position="59"/>
        <end position="62"/>
    </location>
    <ligand>
        <name>GTP</name>
        <dbReference type="ChEBI" id="CHEBI:37565"/>
    </ligand>
</feature>
<protein>
    <recommendedName>
        <fullName evidence="1">Nucleotide-binding protein CLD_1131</fullName>
    </recommendedName>
</protein>
<evidence type="ECO:0000255" key="1">
    <source>
        <dbReference type="HAMAP-Rule" id="MF_00636"/>
    </source>
</evidence>
<accession>B1IFW3</accession>
<dbReference type="EMBL" id="CP000939">
    <property type="protein sequence ID" value="ACA46112.1"/>
    <property type="molecule type" value="Genomic_DNA"/>
</dbReference>
<dbReference type="SMR" id="B1IFW3"/>
<dbReference type="KEGG" id="cbb:CLD_1131"/>
<dbReference type="HOGENOM" id="CLU_059558_0_0_9"/>
<dbReference type="Proteomes" id="UP000008541">
    <property type="component" value="Chromosome"/>
</dbReference>
<dbReference type="GO" id="GO:0005524">
    <property type="term" value="F:ATP binding"/>
    <property type="evidence" value="ECO:0007669"/>
    <property type="project" value="UniProtKB-UniRule"/>
</dbReference>
<dbReference type="GO" id="GO:0005525">
    <property type="term" value="F:GTP binding"/>
    <property type="evidence" value="ECO:0007669"/>
    <property type="project" value="UniProtKB-UniRule"/>
</dbReference>
<dbReference type="Gene3D" id="3.40.50.300">
    <property type="entry name" value="P-loop containing nucleotide triphosphate hydrolases"/>
    <property type="match status" value="1"/>
</dbReference>
<dbReference type="HAMAP" id="MF_00636">
    <property type="entry name" value="RapZ_like"/>
    <property type="match status" value="1"/>
</dbReference>
<dbReference type="InterPro" id="IPR027417">
    <property type="entry name" value="P-loop_NTPase"/>
</dbReference>
<dbReference type="InterPro" id="IPR005337">
    <property type="entry name" value="RapZ-like"/>
</dbReference>
<dbReference type="InterPro" id="IPR053930">
    <property type="entry name" value="RapZ-like_N"/>
</dbReference>
<dbReference type="InterPro" id="IPR053931">
    <property type="entry name" value="RapZ_C"/>
</dbReference>
<dbReference type="NCBIfam" id="NF003828">
    <property type="entry name" value="PRK05416.1"/>
    <property type="match status" value="1"/>
</dbReference>
<dbReference type="PANTHER" id="PTHR30448">
    <property type="entry name" value="RNASE ADAPTER PROTEIN RAPZ"/>
    <property type="match status" value="1"/>
</dbReference>
<dbReference type="PANTHER" id="PTHR30448:SF0">
    <property type="entry name" value="RNASE ADAPTER PROTEIN RAPZ"/>
    <property type="match status" value="1"/>
</dbReference>
<dbReference type="Pfam" id="PF22740">
    <property type="entry name" value="PapZ_C"/>
    <property type="match status" value="1"/>
</dbReference>
<dbReference type="Pfam" id="PF03668">
    <property type="entry name" value="RapZ-like_N"/>
    <property type="match status" value="1"/>
</dbReference>
<dbReference type="PIRSF" id="PIRSF005052">
    <property type="entry name" value="P-loopkin"/>
    <property type="match status" value="1"/>
</dbReference>
<dbReference type="SUPFAM" id="SSF52540">
    <property type="entry name" value="P-loop containing nucleoside triphosphate hydrolases"/>
    <property type="match status" value="1"/>
</dbReference>